<reference key="1">
    <citation type="thesis" date="1993" institute="University of Bayreuth" country="Germany">
        <authorList>
            <person name="Lechler A."/>
        </authorList>
    </citation>
    <scope>NUCLEOTIDE SEQUENCE [GENOMIC DNA]</scope>
</reference>
<organism>
    <name type="scientific">Enterobacter agglomerans</name>
    <name type="common">Erwinia herbicola</name>
    <name type="synonym">Pantoea agglomerans</name>
    <dbReference type="NCBI Taxonomy" id="549"/>
    <lineage>
        <taxon>Bacteria</taxon>
        <taxon>Pseudomonadati</taxon>
        <taxon>Pseudomonadota</taxon>
        <taxon>Gammaproteobacteria</taxon>
        <taxon>Enterobacterales</taxon>
        <taxon>Erwiniaceae</taxon>
        <taxon>Pantoea</taxon>
        <taxon>Pantoea agglomerans group</taxon>
    </lineage>
</organism>
<protein>
    <recommendedName>
        <fullName>Homocitrate synthase</fullName>
        <ecNumber>2.3.3.14</ecNumber>
    </recommendedName>
</protein>
<gene>
    <name type="primary">nifV</name>
</gene>
<proteinExistence type="inferred from homology"/>
<comment type="function">
    <text>This protein is a Fe-Mo-cofactor biosynthetic component.</text>
</comment>
<comment type="catalytic activity">
    <reaction>
        <text>acetyl-CoA + 2-oxoglutarate + H2O = (2R)-homocitrate + CoA + H(+)</text>
        <dbReference type="Rhea" id="RHEA:12929"/>
        <dbReference type="ChEBI" id="CHEBI:15377"/>
        <dbReference type="ChEBI" id="CHEBI:15378"/>
        <dbReference type="ChEBI" id="CHEBI:16810"/>
        <dbReference type="ChEBI" id="CHEBI:57287"/>
        <dbReference type="ChEBI" id="CHEBI:57288"/>
        <dbReference type="ChEBI" id="CHEBI:58884"/>
        <dbReference type="EC" id="2.3.3.14"/>
    </reaction>
</comment>
<comment type="similarity">
    <text evidence="2">Belongs to the alpha-IPM synthase/homocitrate synthase family.</text>
</comment>
<accession>Q52070</accession>
<sequence length="400" mass="43441">MAASESERTGGGNRPMAVIINDTTLRDGEQSPGVAFRASEKLEIAQALVNAGVRELEAGTPALGEEECVRLAILRRQLPDTVMMSWCRMNSAEIHDSARVGMDWVDISVPASDLLREQKLHRPWPAVIASLKPLVQLAHRLGMRVCMGCEDASRSADETLHMLAEVAADLGIERMRFADTLGILDPFSTFTRISALRQHWHGGLEIHAHNDLGMATANTLAAVRAGATHVNTTVLGLGERAGNAALESVTLSLDRCLHLDCGIDFTELPALCRLVAAAAGRTIDVQHPLVGGQVFTHESGLHVAALLRDPRSYQGIDPSLVGREFNLVLGKHSGRQAVSGICARLGYILSETQTLLMLQEVKRFAEHFKRNPGEDEVIAMCQMRMDDQIPFEGQLQAQGG</sequence>
<evidence type="ECO:0000255" key="1">
    <source>
        <dbReference type="PROSITE-ProRule" id="PRU01151"/>
    </source>
</evidence>
<evidence type="ECO:0000305" key="2"/>
<geneLocation type="plasmid">
    <name>pEA3</name>
</geneLocation>
<keyword id="KW-0535">Nitrogen fixation</keyword>
<keyword id="KW-0614">Plasmid</keyword>
<keyword id="KW-0808">Transferase</keyword>
<feature type="chain" id="PRO_0000140461" description="Homocitrate synthase">
    <location>
        <begin position="1"/>
        <end position="400"/>
    </location>
</feature>
<feature type="domain" description="Pyruvate carboxyltransferase" evidence="1">
    <location>
        <begin position="18"/>
        <end position="269"/>
    </location>
</feature>
<dbReference type="EC" id="2.3.3.14"/>
<dbReference type="EMBL" id="X99694">
    <property type="protein sequence ID" value="CAA68021.1"/>
    <property type="molecule type" value="Genomic_DNA"/>
</dbReference>
<dbReference type="SMR" id="Q52070"/>
<dbReference type="GO" id="GO:0004410">
    <property type="term" value="F:homocitrate synthase activity"/>
    <property type="evidence" value="ECO:0007669"/>
    <property type="project" value="UniProtKB-EC"/>
</dbReference>
<dbReference type="GO" id="GO:0009058">
    <property type="term" value="P:biosynthetic process"/>
    <property type="evidence" value="ECO:0007669"/>
    <property type="project" value="UniProtKB-ARBA"/>
</dbReference>
<dbReference type="GO" id="GO:0019752">
    <property type="term" value="P:carboxylic acid metabolic process"/>
    <property type="evidence" value="ECO:0007669"/>
    <property type="project" value="InterPro"/>
</dbReference>
<dbReference type="GO" id="GO:0009399">
    <property type="term" value="P:nitrogen fixation"/>
    <property type="evidence" value="ECO:0007669"/>
    <property type="project" value="UniProtKB-KW"/>
</dbReference>
<dbReference type="Gene3D" id="1.10.238.260">
    <property type="match status" value="1"/>
</dbReference>
<dbReference type="Gene3D" id="3.20.20.70">
    <property type="entry name" value="Aldolase class I"/>
    <property type="match status" value="1"/>
</dbReference>
<dbReference type="InterPro" id="IPR002034">
    <property type="entry name" value="AIPM/Hcit_synth_CS"/>
</dbReference>
<dbReference type="InterPro" id="IPR013785">
    <property type="entry name" value="Aldolase_TIM"/>
</dbReference>
<dbReference type="InterPro" id="IPR054691">
    <property type="entry name" value="LeuA/HCS_post-cat"/>
</dbReference>
<dbReference type="InterPro" id="IPR013477">
    <property type="entry name" value="NifV/FrbC"/>
</dbReference>
<dbReference type="InterPro" id="IPR000891">
    <property type="entry name" value="PYR_CT"/>
</dbReference>
<dbReference type="NCBIfam" id="TIGR02660">
    <property type="entry name" value="nifV_homocitr"/>
    <property type="match status" value="1"/>
</dbReference>
<dbReference type="PANTHER" id="PTHR42880">
    <property type="entry name" value="HOMOCITRATE SYNTHASE"/>
    <property type="match status" value="1"/>
</dbReference>
<dbReference type="PANTHER" id="PTHR42880:SF1">
    <property type="entry name" value="ISOPROPYLMALATE_HOMOCITRATE_CITRAMALATE SYNTHASE FAMILY PROTEIN"/>
    <property type="match status" value="1"/>
</dbReference>
<dbReference type="Pfam" id="PF22617">
    <property type="entry name" value="HCS_D2"/>
    <property type="match status" value="1"/>
</dbReference>
<dbReference type="Pfam" id="PF00682">
    <property type="entry name" value="HMGL-like"/>
    <property type="match status" value="1"/>
</dbReference>
<dbReference type="SUPFAM" id="SSF51569">
    <property type="entry name" value="Aldolase"/>
    <property type="match status" value="1"/>
</dbReference>
<dbReference type="PROSITE" id="PS00815">
    <property type="entry name" value="AIPM_HOMOCIT_SYNTH_1"/>
    <property type="match status" value="1"/>
</dbReference>
<dbReference type="PROSITE" id="PS00816">
    <property type="entry name" value="AIPM_HOMOCIT_SYNTH_2"/>
    <property type="match status" value="1"/>
</dbReference>
<dbReference type="PROSITE" id="PS50991">
    <property type="entry name" value="PYR_CT"/>
    <property type="match status" value="1"/>
</dbReference>
<name>NIFV_ENTAG</name>